<proteinExistence type="inferred from homology"/>
<protein>
    <recommendedName>
        <fullName evidence="1">Cell division protein SepF</fullName>
    </recommendedName>
</protein>
<reference key="1">
    <citation type="journal article" date="2010" name="Environ. Microbiol.">
        <title>The genome of Syntrophomonas wolfei: new insights into syntrophic metabolism and biohydrogen production.</title>
        <authorList>
            <person name="Sieber J.R."/>
            <person name="Sims D.R."/>
            <person name="Han C."/>
            <person name="Kim E."/>
            <person name="Lykidis A."/>
            <person name="Lapidus A.L."/>
            <person name="McDonnald E."/>
            <person name="Rohlin L."/>
            <person name="Culley D.E."/>
            <person name="Gunsalus R."/>
            <person name="McInerney M.J."/>
        </authorList>
    </citation>
    <scope>NUCLEOTIDE SEQUENCE [LARGE SCALE GENOMIC DNA]</scope>
    <source>
        <strain>DSM 2245B / Goettingen</strain>
    </source>
</reference>
<accession>Q0AYD5</accession>
<gene>
    <name evidence="1" type="primary">sepF</name>
    <name type="ordered locus">Swol_0954</name>
</gene>
<name>SEPF_SYNWW</name>
<keyword id="KW-0131">Cell cycle</keyword>
<keyword id="KW-0132">Cell division</keyword>
<keyword id="KW-0963">Cytoplasm</keyword>
<keyword id="KW-1185">Reference proteome</keyword>
<keyword id="KW-0717">Septation</keyword>
<feature type="chain" id="PRO_0000334132" description="Cell division protein SepF">
    <location>
        <begin position="1"/>
        <end position="142"/>
    </location>
</feature>
<comment type="function">
    <text evidence="1">Cell division protein that is part of the divisome complex and is recruited early to the Z-ring. Probably stimulates Z-ring formation, perhaps through the cross-linking of FtsZ protofilaments. Its function overlaps with FtsA.</text>
</comment>
<comment type="subunit">
    <text evidence="1">Homodimer. Interacts with FtsZ.</text>
</comment>
<comment type="subcellular location">
    <subcellularLocation>
        <location evidence="1">Cytoplasm</location>
    </subcellularLocation>
    <text evidence="1">Localizes to the division site, in a FtsZ-dependent manner.</text>
</comment>
<comment type="similarity">
    <text evidence="1">Belongs to the SepF family.</text>
</comment>
<evidence type="ECO:0000255" key="1">
    <source>
        <dbReference type="HAMAP-Rule" id="MF_01197"/>
    </source>
</evidence>
<dbReference type="EMBL" id="CP000448">
    <property type="protein sequence ID" value="ABI68269.1"/>
    <property type="molecule type" value="Genomic_DNA"/>
</dbReference>
<dbReference type="RefSeq" id="WP_011640374.1">
    <property type="nucleotide sequence ID" value="NC_008346.1"/>
</dbReference>
<dbReference type="SMR" id="Q0AYD5"/>
<dbReference type="STRING" id="335541.Swol_0954"/>
<dbReference type="KEGG" id="swo:Swol_0954"/>
<dbReference type="eggNOG" id="COG1799">
    <property type="taxonomic scope" value="Bacteria"/>
</dbReference>
<dbReference type="HOGENOM" id="CLU_078499_4_0_9"/>
<dbReference type="OrthoDB" id="9815206at2"/>
<dbReference type="Proteomes" id="UP000001968">
    <property type="component" value="Chromosome"/>
</dbReference>
<dbReference type="GO" id="GO:0005737">
    <property type="term" value="C:cytoplasm"/>
    <property type="evidence" value="ECO:0007669"/>
    <property type="project" value="UniProtKB-SubCell"/>
</dbReference>
<dbReference type="GO" id="GO:0000917">
    <property type="term" value="P:division septum assembly"/>
    <property type="evidence" value="ECO:0007669"/>
    <property type="project" value="UniProtKB-KW"/>
</dbReference>
<dbReference type="GO" id="GO:0043093">
    <property type="term" value="P:FtsZ-dependent cytokinesis"/>
    <property type="evidence" value="ECO:0007669"/>
    <property type="project" value="UniProtKB-UniRule"/>
</dbReference>
<dbReference type="Gene3D" id="3.30.110.150">
    <property type="entry name" value="SepF-like protein"/>
    <property type="match status" value="1"/>
</dbReference>
<dbReference type="HAMAP" id="MF_01197">
    <property type="entry name" value="SepF"/>
    <property type="match status" value="1"/>
</dbReference>
<dbReference type="InterPro" id="IPR023052">
    <property type="entry name" value="Cell_div_SepF"/>
</dbReference>
<dbReference type="InterPro" id="IPR007561">
    <property type="entry name" value="Cell_div_SepF/SepF-rel"/>
</dbReference>
<dbReference type="InterPro" id="IPR038594">
    <property type="entry name" value="SepF-like_sf"/>
</dbReference>
<dbReference type="PANTHER" id="PTHR35798">
    <property type="entry name" value="CELL DIVISION PROTEIN SEPF"/>
    <property type="match status" value="1"/>
</dbReference>
<dbReference type="PANTHER" id="PTHR35798:SF1">
    <property type="entry name" value="CELL DIVISION PROTEIN SEPF"/>
    <property type="match status" value="1"/>
</dbReference>
<dbReference type="Pfam" id="PF04472">
    <property type="entry name" value="SepF"/>
    <property type="match status" value="1"/>
</dbReference>
<organism>
    <name type="scientific">Syntrophomonas wolfei subsp. wolfei (strain DSM 2245B / Goettingen)</name>
    <dbReference type="NCBI Taxonomy" id="335541"/>
    <lineage>
        <taxon>Bacteria</taxon>
        <taxon>Bacillati</taxon>
        <taxon>Bacillota</taxon>
        <taxon>Clostridia</taxon>
        <taxon>Eubacteriales</taxon>
        <taxon>Syntrophomonadaceae</taxon>
        <taxon>Syntrophomonas</taxon>
    </lineage>
</organism>
<sequence length="142" mass="16212">MGVMDGLWRWLGVEREEVREEIIELPAYSEENQRGPTNVVSIHSNKTFKVVVCEPESFDEVQVLADHLKSRKQLILNFDNTPPEVSQRIIDFISGTTYSLEGHSQQLGKNIFIFTPSNVEIAKDHRSLMRKHGFANPFGGEK</sequence>